<proteinExistence type="inferred from homology"/>
<feature type="chain" id="PRO_1000205716" description="Large ribosomal subunit protein bL20">
    <location>
        <begin position="1"/>
        <end position="118"/>
    </location>
</feature>
<accession>C4K779</accession>
<dbReference type="EMBL" id="CP001277">
    <property type="protein sequence ID" value="ACQ68422.1"/>
    <property type="molecule type" value="Genomic_DNA"/>
</dbReference>
<dbReference type="RefSeq" id="WP_015874186.1">
    <property type="nucleotide sequence ID" value="NC_012751.1"/>
</dbReference>
<dbReference type="SMR" id="C4K779"/>
<dbReference type="STRING" id="572265.HDEF_1827"/>
<dbReference type="GeneID" id="66261414"/>
<dbReference type="KEGG" id="hde:HDEF_1827"/>
<dbReference type="eggNOG" id="COG0292">
    <property type="taxonomic scope" value="Bacteria"/>
</dbReference>
<dbReference type="HOGENOM" id="CLU_123265_0_1_6"/>
<dbReference type="Proteomes" id="UP000002334">
    <property type="component" value="Chromosome"/>
</dbReference>
<dbReference type="GO" id="GO:1990904">
    <property type="term" value="C:ribonucleoprotein complex"/>
    <property type="evidence" value="ECO:0007669"/>
    <property type="project" value="UniProtKB-KW"/>
</dbReference>
<dbReference type="GO" id="GO:0005840">
    <property type="term" value="C:ribosome"/>
    <property type="evidence" value="ECO:0007669"/>
    <property type="project" value="UniProtKB-KW"/>
</dbReference>
<dbReference type="GO" id="GO:0019843">
    <property type="term" value="F:rRNA binding"/>
    <property type="evidence" value="ECO:0007669"/>
    <property type="project" value="UniProtKB-UniRule"/>
</dbReference>
<dbReference type="GO" id="GO:0003735">
    <property type="term" value="F:structural constituent of ribosome"/>
    <property type="evidence" value="ECO:0007669"/>
    <property type="project" value="InterPro"/>
</dbReference>
<dbReference type="GO" id="GO:0000027">
    <property type="term" value="P:ribosomal large subunit assembly"/>
    <property type="evidence" value="ECO:0007669"/>
    <property type="project" value="UniProtKB-UniRule"/>
</dbReference>
<dbReference type="GO" id="GO:0006412">
    <property type="term" value="P:translation"/>
    <property type="evidence" value="ECO:0007669"/>
    <property type="project" value="InterPro"/>
</dbReference>
<dbReference type="CDD" id="cd07026">
    <property type="entry name" value="Ribosomal_L20"/>
    <property type="match status" value="1"/>
</dbReference>
<dbReference type="FunFam" id="1.10.1900.20:FF:000001">
    <property type="entry name" value="50S ribosomal protein L20"/>
    <property type="match status" value="1"/>
</dbReference>
<dbReference type="Gene3D" id="6.10.160.10">
    <property type="match status" value="1"/>
</dbReference>
<dbReference type="Gene3D" id="1.10.1900.20">
    <property type="entry name" value="Ribosomal protein L20"/>
    <property type="match status" value="1"/>
</dbReference>
<dbReference type="HAMAP" id="MF_00382">
    <property type="entry name" value="Ribosomal_bL20"/>
    <property type="match status" value="1"/>
</dbReference>
<dbReference type="InterPro" id="IPR005813">
    <property type="entry name" value="Ribosomal_bL20"/>
</dbReference>
<dbReference type="InterPro" id="IPR049946">
    <property type="entry name" value="RIBOSOMAL_L20_CS"/>
</dbReference>
<dbReference type="InterPro" id="IPR035566">
    <property type="entry name" value="Ribosomal_protein_bL20_C"/>
</dbReference>
<dbReference type="NCBIfam" id="TIGR01032">
    <property type="entry name" value="rplT_bact"/>
    <property type="match status" value="1"/>
</dbReference>
<dbReference type="PANTHER" id="PTHR10986">
    <property type="entry name" value="39S RIBOSOMAL PROTEIN L20"/>
    <property type="match status" value="1"/>
</dbReference>
<dbReference type="Pfam" id="PF00453">
    <property type="entry name" value="Ribosomal_L20"/>
    <property type="match status" value="1"/>
</dbReference>
<dbReference type="PRINTS" id="PR00062">
    <property type="entry name" value="RIBOSOMALL20"/>
</dbReference>
<dbReference type="SUPFAM" id="SSF74731">
    <property type="entry name" value="Ribosomal protein L20"/>
    <property type="match status" value="1"/>
</dbReference>
<dbReference type="PROSITE" id="PS00937">
    <property type="entry name" value="RIBOSOMAL_L20"/>
    <property type="match status" value="1"/>
</dbReference>
<gene>
    <name evidence="1" type="primary">rplT</name>
    <name type="ordered locus">HDEF_1827</name>
</gene>
<keyword id="KW-0687">Ribonucleoprotein</keyword>
<keyword id="KW-0689">Ribosomal protein</keyword>
<keyword id="KW-0694">RNA-binding</keyword>
<keyword id="KW-0699">rRNA-binding</keyword>
<evidence type="ECO:0000255" key="1">
    <source>
        <dbReference type="HAMAP-Rule" id="MF_00382"/>
    </source>
</evidence>
<evidence type="ECO:0000305" key="2"/>
<reference key="1">
    <citation type="journal article" date="2009" name="Proc. Natl. Acad. Sci. U.S.A.">
        <title>Hamiltonella defensa, genome evolution of protective bacterial endosymbiont from pathogenic ancestors.</title>
        <authorList>
            <person name="Degnan P.H."/>
            <person name="Yu Y."/>
            <person name="Sisneros N."/>
            <person name="Wing R.A."/>
            <person name="Moran N.A."/>
        </authorList>
    </citation>
    <scope>NUCLEOTIDE SEQUENCE [LARGE SCALE GENOMIC DNA]</scope>
    <source>
        <strain>5AT</strain>
    </source>
</reference>
<name>RL20_HAMD5</name>
<sequence>MARVKRGVVARARHKKILKQAKGYYGARSRVYRVAVQAVTKAGQYAYRDRRQRKRQFRQLWITRINAAAREHGLSYSCLINGLKKAFIDIDRKMLADIAVFDKPSFAALAKKAKEALL</sequence>
<protein>
    <recommendedName>
        <fullName evidence="1">Large ribosomal subunit protein bL20</fullName>
    </recommendedName>
    <alternativeName>
        <fullName evidence="2">50S ribosomal protein L20</fullName>
    </alternativeName>
</protein>
<comment type="function">
    <text evidence="1">Binds directly to 23S ribosomal RNA and is necessary for the in vitro assembly process of the 50S ribosomal subunit. It is not involved in the protein synthesizing functions of that subunit.</text>
</comment>
<comment type="similarity">
    <text evidence="1">Belongs to the bacterial ribosomal protein bL20 family.</text>
</comment>
<organism>
    <name type="scientific">Hamiltonella defensa subsp. Acyrthosiphon pisum (strain 5AT)</name>
    <dbReference type="NCBI Taxonomy" id="572265"/>
    <lineage>
        <taxon>Bacteria</taxon>
        <taxon>Pseudomonadati</taxon>
        <taxon>Pseudomonadota</taxon>
        <taxon>Gammaproteobacteria</taxon>
        <taxon>Enterobacterales</taxon>
        <taxon>Enterobacteriaceae</taxon>
        <taxon>aphid secondary symbionts</taxon>
        <taxon>Candidatus Hamiltonella</taxon>
    </lineage>
</organism>